<dbReference type="EC" id="3.4.15.1" evidence="2"/>
<dbReference type="EMBL" id="AEMK02000080">
    <property type="status" value="NOT_ANNOTATED_CDS"/>
    <property type="molecule type" value="Genomic_DNA"/>
</dbReference>
<dbReference type="SMR" id="F1RRW5"/>
<dbReference type="FunCoup" id="F1RRW5">
    <property type="interactions" value="121"/>
</dbReference>
<dbReference type="STRING" id="9823.ENSSSCP00000018326"/>
<dbReference type="BindingDB" id="F1RRW5"/>
<dbReference type="ChEMBL" id="CHEMBL4523113"/>
<dbReference type="GlyCosmos" id="F1RRW5">
    <property type="glycosylation" value="17 sites, No reported glycans"/>
</dbReference>
<dbReference type="GlyGen" id="F1RRW5">
    <property type="glycosylation" value="17 sites"/>
</dbReference>
<dbReference type="PaxDb" id="9823-ENSSSCP00000030627"/>
<dbReference type="PeptideAtlas" id="F1RRW5"/>
<dbReference type="Ensembl" id="ENSSSCT00000018828.4">
    <property type="protein sequence ID" value="ENSSSCP00000018326.3"/>
    <property type="gene ID" value="ENSSSCG00000017296.6"/>
</dbReference>
<dbReference type="eggNOG" id="KOG3690">
    <property type="taxonomic scope" value="Eukaryota"/>
</dbReference>
<dbReference type="GeneTree" id="ENSGT00940000162051"/>
<dbReference type="HOGENOM" id="CLU_006219_0_0_1"/>
<dbReference type="InParanoid" id="F1RRW5"/>
<dbReference type="Reactome" id="R-SSC-2022377">
    <property type="pathway name" value="Metabolism of Angiotensinogen to Angiotensins"/>
</dbReference>
<dbReference type="Proteomes" id="UP000008227">
    <property type="component" value="Chromosome 12"/>
</dbReference>
<dbReference type="Proteomes" id="UP000314985">
    <property type="component" value="Unplaced"/>
</dbReference>
<dbReference type="Proteomes" id="UP000694570">
    <property type="component" value="Unplaced"/>
</dbReference>
<dbReference type="Proteomes" id="UP000694571">
    <property type="component" value="Unplaced"/>
</dbReference>
<dbReference type="Proteomes" id="UP000694720">
    <property type="component" value="Unplaced"/>
</dbReference>
<dbReference type="Proteomes" id="UP000694722">
    <property type="component" value="Unplaced"/>
</dbReference>
<dbReference type="Proteomes" id="UP000694723">
    <property type="component" value="Unplaced"/>
</dbReference>
<dbReference type="Proteomes" id="UP000694724">
    <property type="component" value="Unplaced"/>
</dbReference>
<dbReference type="Proteomes" id="UP000694725">
    <property type="component" value="Unplaced"/>
</dbReference>
<dbReference type="Proteomes" id="UP000694726">
    <property type="component" value="Unplaced"/>
</dbReference>
<dbReference type="Proteomes" id="UP000694727">
    <property type="component" value="Unplaced"/>
</dbReference>
<dbReference type="Proteomes" id="UP000694728">
    <property type="component" value="Unplaced"/>
</dbReference>
<dbReference type="Bgee" id="ENSSSCG00000017296">
    <property type="expression patterns" value="Expressed in testis and 43 other cell types or tissues"/>
</dbReference>
<dbReference type="ExpressionAtlas" id="F1RRW5">
    <property type="expression patterns" value="baseline and differential"/>
</dbReference>
<dbReference type="GO" id="GO:0005768">
    <property type="term" value="C:endosome"/>
    <property type="evidence" value="ECO:0007669"/>
    <property type="project" value="Ensembl"/>
</dbReference>
<dbReference type="GO" id="GO:0009897">
    <property type="term" value="C:external side of plasma membrane"/>
    <property type="evidence" value="ECO:0007669"/>
    <property type="project" value="Ensembl"/>
</dbReference>
<dbReference type="GO" id="GO:0070062">
    <property type="term" value="C:extracellular exosome"/>
    <property type="evidence" value="ECO:0007669"/>
    <property type="project" value="Ensembl"/>
</dbReference>
<dbReference type="GO" id="GO:0005764">
    <property type="term" value="C:lysosome"/>
    <property type="evidence" value="ECO:0007669"/>
    <property type="project" value="Ensembl"/>
</dbReference>
<dbReference type="GO" id="GO:0005886">
    <property type="term" value="C:plasma membrane"/>
    <property type="evidence" value="ECO:0000318"/>
    <property type="project" value="GO_Central"/>
</dbReference>
<dbReference type="GO" id="GO:0031711">
    <property type="term" value="F:bradykinin receptor binding"/>
    <property type="evidence" value="ECO:0007669"/>
    <property type="project" value="Ensembl"/>
</dbReference>
<dbReference type="GO" id="GO:0005516">
    <property type="term" value="F:calmodulin binding"/>
    <property type="evidence" value="ECO:0007669"/>
    <property type="project" value="UniProtKB-KW"/>
</dbReference>
<dbReference type="GO" id="GO:0031404">
    <property type="term" value="F:chloride ion binding"/>
    <property type="evidence" value="ECO:0000250"/>
    <property type="project" value="UniProtKB"/>
</dbReference>
<dbReference type="GO" id="GO:0004181">
    <property type="term" value="F:metallocarboxypeptidase activity"/>
    <property type="evidence" value="ECO:0007669"/>
    <property type="project" value="Ensembl"/>
</dbReference>
<dbReference type="GO" id="GO:0070573">
    <property type="term" value="F:metallodipeptidase activity"/>
    <property type="evidence" value="ECO:0000250"/>
    <property type="project" value="UniProtKB"/>
</dbReference>
<dbReference type="GO" id="GO:0004222">
    <property type="term" value="F:metalloendopeptidase activity"/>
    <property type="evidence" value="ECO:0000250"/>
    <property type="project" value="UniProtKB"/>
</dbReference>
<dbReference type="GO" id="GO:0008237">
    <property type="term" value="F:metallopeptidase activity"/>
    <property type="evidence" value="ECO:0000318"/>
    <property type="project" value="GO_Central"/>
</dbReference>
<dbReference type="GO" id="GO:0051019">
    <property type="term" value="F:mitogen-activated protein kinase binding"/>
    <property type="evidence" value="ECO:0007669"/>
    <property type="project" value="Ensembl"/>
</dbReference>
<dbReference type="GO" id="GO:0031434">
    <property type="term" value="F:mitogen-activated protein kinase kinase binding"/>
    <property type="evidence" value="ECO:0007669"/>
    <property type="project" value="Ensembl"/>
</dbReference>
<dbReference type="GO" id="GO:0008233">
    <property type="term" value="F:peptidase activity"/>
    <property type="evidence" value="ECO:0000250"/>
    <property type="project" value="UniProtKB"/>
</dbReference>
<dbReference type="GO" id="GO:0008241">
    <property type="term" value="F:peptidyl-dipeptidase activity"/>
    <property type="evidence" value="ECO:0000314"/>
    <property type="project" value="UniProtKB"/>
</dbReference>
<dbReference type="GO" id="GO:0008240">
    <property type="term" value="F:tripeptidyl-peptidase activity"/>
    <property type="evidence" value="ECO:0007669"/>
    <property type="project" value="Ensembl"/>
</dbReference>
<dbReference type="GO" id="GO:0008270">
    <property type="term" value="F:zinc ion binding"/>
    <property type="evidence" value="ECO:0007669"/>
    <property type="project" value="Ensembl"/>
</dbReference>
<dbReference type="GO" id="GO:0050435">
    <property type="term" value="P:amyloid-beta metabolic process"/>
    <property type="evidence" value="ECO:0007669"/>
    <property type="project" value="Ensembl"/>
</dbReference>
<dbReference type="GO" id="GO:0002003">
    <property type="term" value="P:angiotensin maturation"/>
    <property type="evidence" value="ECO:0000250"/>
    <property type="project" value="UniProtKB"/>
</dbReference>
<dbReference type="GO" id="GO:0038166">
    <property type="term" value="P:angiotensin-activated signaling pathway"/>
    <property type="evidence" value="ECO:0007669"/>
    <property type="project" value="Ensembl"/>
</dbReference>
<dbReference type="GO" id="GO:0050482">
    <property type="term" value="P:arachidonate secretion"/>
    <property type="evidence" value="ECO:0007669"/>
    <property type="project" value="Ensembl"/>
</dbReference>
<dbReference type="GO" id="GO:0010815">
    <property type="term" value="P:bradykinin catabolic process"/>
    <property type="evidence" value="ECO:0000314"/>
    <property type="project" value="UniProtKB"/>
</dbReference>
<dbReference type="GO" id="GO:0071838">
    <property type="term" value="P:cell proliferation in bone marrow"/>
    <property type="evidence" value="ECO:0007669"/>
    <property type="project" value="Ensembl"/>
</dbReference>
<dbReference type="GO" id="GO:0060047">
    <property type="term" value="P:heart contraction"/>
    <property type="evidence" value="ECO:0007669"/>
    <property type="project" value="Ensembl"/>
</dbReference>
<dbReference type="GO" id="GO:0042447">
    <property type="term" value="P:hormone catabolic process"/>
    <property type="evidence" value="ECO:0000250"/>
    <property type="project" value="UniProtKB"/>
</dbReference>
<dbReference type="GO" id="GO:0042445">
    <property type="term" value="P:hormone metabolic process"/>
    <property type="evidence" value="ECO:0000250"/>
    <property type="project" value="UniProtKB"/>
</dbReference>
<dbReference type="GO" id="GO:0001822">
    <property type="term" value="P:kidney development"/>
    <property type="evidence" value="ECO:0000250"/>
    <property type="project" value="UniProtKB"/>
</dbReference>
<dbReference type="GO" id="GO:0008584">
    <property type="term" value="P:male gonad development"/>
    <property type="evidence" value="ECO:0007669"/>
    <property type="project" value="Ensembl"/>
</dbReference>
<dbReference type="GO" id="GO:1903597">
    <property type="term" value="P:negative regulation of gap junction assembly"/>
    <property type="evidence" value="ECO:0007669"/>
    <property type="project" value="Ensembl"/>
</dbReference>
<dbReference type="GO" id="GO:0010629">
    <property type="term" value="P:negative regulation of gene expression"/>
    <property type="evidence" value="ECO:0007669"/>
    <property type="project" value="Ensembl"/>
</dbReference>
<dbReference type="GO" id="GO:0002446">
    <property type="term" value="P:neutrophil mediated immunity"/>
    <property type="evidence" value="ECO:0007669"/>
    <property type="project" value="Ensembl"/>
</dbReference>
<dbReference type="GO" id="GO:0003084">
    <property type="term" value="P:positive regulation of systemic arterial blood pressure"/>
    <property type="evidence" value="ECO:0000318"/>
    <property type="project" value="GO_Central"/>
</dbReference>
<dbReference type="GO" id="GO:0010608">
    <property type="term" value="P:post-transcriptional regulation of gene expression"/>
    <property type="evidence" value="ECO:0007669"/>
    <property type="project" value="Ensembl"/>
</dbReference>
<dbReference type="GO" id="GO:0060177">
    <property type="term" value="P:regulation of angiotensin metabolic process"/>
    <property type="evidence" value="ECO:0007669"/>
    <property type="project" value="Ensembl"/>
</dbReference>
<dbReference type="GO" id="GO:0008217">
    <property type="term" value="P:regulation of blood pressure"/>
    <property type="evidence" value="ECO:0000250"/>
    <property type="project" value="UniProtKB"/>
</dbReference>
<dbReference type="GO" id="GO:0086091">
    <property type="term" value="P:regulation of heart rate by cardiac conduction"/>
    <property type="evidence" value="ECO:0007669"/>
    <property type="project" value="Ensembl"/>
</dbReference>
<dbReference type="GO" id="GO:1902033">
    <property type="term" value="P:regulation of hematopoietic stem cell proliferation"/>
    <property type="evidence" value="ECO:0007669"/>
    <property type="project" value="Ensembl"/>
</dbReference>
<dbReference type="GO" id="GO:0048167">
    <property type="term" value="P:regulation of synaptic plasticity"/>
    <property type="evidence" value="ECO:0000250"/>
    <property type="project" value="UniProtKB"/>
</dbReference>
<dbReference type="GO" id="GO:0003081">
    <property type="term" value="P:regulation of systemic arterial blood pressure by renin-angiotensin"/>
    <property type="evidence" value="ECO:0000318"/>
    <property type="project" value="GO_Central"/>
</dbReference>
<dbReference type="GO" id="GO:0007283">
    <property type="term" value="P:spermatogenesis"/>
    <property type="evidence" value="ECO:0007669"/>
    <property type="project" value="Ensembl"/>
</dbReference>
<dbReference type="GO" id="GO:0010814">
    <property type="term" value="P:substance P catabolic process"/>
    <property type="evidence" value="ECO:0000250"/>
    <property type="project" value="UniProtKB"/>
</dbReference>
<dbReference type="CDD" id="cd06461">
    <property type="entry name" value="M2_ACE"/>
    <property type="match status" value="2"/>
</dbReference>
<dbReference type="FunFam" id="1.10.1370.30:FF:000004">
    <property type="entry name" value="Angiotensin-converting enzyme"/>
    <property type="match status" value="2"/>
</dbReference>
<dbReference type="Gene3D" id="1.10.1370.30">
    <property type="match status" value="1"/>
</dbReference>
<dbReference type="InterPro" id="IPR001548">
    <property type="entry name" value="Peptidase_M2"/>
</dbReference>
<dbReference type="PANTHER" id="PTHR10514">
    <property type="entry name" value="ANGIOTENSIN-CONVERTING ENZYME"/>
    <property type="match status" value="1"/>
</dbReference>
<dbReference type="PANTHER" id="PTHR10514:SF25">
    <property type="entry name" value="ANGIOTENSIN-CONVERTING ENZYME"/>
    <property type="match status" value="1"/>
</dbReference>
<dbReference type="Pfam" id="PF01401">
    <property type="entry name" value="Peptidase_M2"/>
    <property type="match status" value="2"/>
</dbReference>
<dbReference type="PRINTS" id="PR00791">
    <property type="entry name" value="PEPDIPTASEA"/>
</dbReference>
<dbReference type="SUPFAM" id="SSF55486">
    <property type="entry name" value="Metalloproteases ('zincins'), catalytic domain"/>
    <property type="match status" value="2"/>
</dbReference>
<dbReference type="PROSITE" id="PS52011">
    <property type="entry name" value="PEPTIDASE_M2"/>
    <property type="match status" value="2"/>
</dbReference>
<dbReference type="PROSITE" id="PS00142">
    <property type="entry name" value="ZINC_PROTEASE"/>
    <property type="match status" value="2"/>
</dbReference>
<comment type="function">
    <text evidence="1 2 6">Dipeptidyl carboxypeptidase that removes dipeptides from the C-terminus of a variety of circulating hormones, such as angiotensin I, bradykinin or enkephalins, thereby playing a key role in the regulation of blood pressure, electrolyte homeostasis or synaptic plasticity (By similarity). Composed of two similar catalytic domains, each possessing a functional active site, with different selectivity for substrates (By similarity). Plays a major role in the angiotensin-renin system that regulates blood pressure and sodium retention by the kidney by converting angiotensin I to angiotensin II, resulting in an increase of the vasoconstrictor activity of angiotensin (By similarity). Also able to inactivate bradykinin, a potent vasodilator, and therefore enhance the blood pressure response (PubMed:4962200). Acts as a regulator of synaptic transmission by mediating cleavage of neuropeptide hormones, such as substance P, neurotensin or enkephalins (By similarity). Catalyzes degradation of different enkephalin neuropeptides (Met-enkephalin, Leu-enkephalin, Met-enkephalin-Arg-Phe and possibly Met-enkephalin-Arg-Gly-Leu) (By similarity). Acts as a regulator of synaptic plasticity in the nucleus accumbens of the brain by mediating cleavage of Met-enkephalin-Arg-Phe, a strong ligand of Mu-type opioid receptor OPRM1, into Met-enkephalin (By similarity). Met-enkephalin-Arg-Phe cleavage by ACE decreases activation of OPRM1, leading to long-term synaptic potentiation of glutamate release (By similarity). Also acts as a regulator of hematopoietic stem cell differentiation by mediating degradation of hemoregulatory peptide N-acetyl-SDKP (AcSDKP) (By similarity). Acts as a regulator of cannabinoid signaling pathway by mediating degradation of hemopressin, an antagonist peptide of the cannabinoid receptor CNR1 (By similarity). Involved in amyloid-beta metabolism by catalyzing degradation of Amyloid-beta protein 40 and Amyloid-beta protein 42 peptides, thereby preventing plaque formation (By similarity). Catalyzes cleavage of cholecystokinin (maturation of Cholecystokinin-8 and Cholecystokinin-5) and Gonadoliberin-1 (both maturation and degradation) hormones (By similarity). Degradation of hemoregulatory peptide N-acetyl-SDKP (AcSDKP) and amyloid-beta proteins is mediated by the N-terminal catalytic domain, while angiotensin I and cholecystokinin cleavage is mediated by the C-terminal catalytic region (By similarity).</text>
</comment>
<comment type="function">
    <molecule>Angiotensin-converting enzyme, soluble form</molecule>
    <text evidence="2">Soluble form that is released in blood plasma and other body fluids following proteolytic cleavage in the juxtamembrane stalk region.</text>
</comment>
<comment type="catalytic activity">
    <reaction evidence="2">
        <text>Release of a C-terminal dipeptide, oligopeptide-|-Xaa-Yaa, when Xaa is not Pro, and Yaa is neither Asp nor Glu. Thus, conversion of angiotensin I to angiotensin II, with increase in vasoconstrictor activity, but no action on angiotensin II.</text>
        <dbReference type="EC" id="3.4.15.1"/>
    </reaction>
</comment>
<comment type="catalytic activity">
    <reaction evidence="2">
        <text>angiotensin I + H2O = L-histidyl-L-leucine + angiotensin II</text>
        <dbReference type="Rhea" id="RHEA:63560"/>
        <dbReference type="ChEBI" id="CHEBI:15377"/>
        <dbReference type="ChEBI" id="CHEBI:58506"/>
        <dbReference type="ChEBI" id="CHEBI:147350"/>
        <dbReference type="ChEBI" id="CHEBI:147392"/>
        <dbReference type="EC" id="3.4.15.1"/>
    </reaction>
    <physiologicalReaction direction="left-to-right" evidence="2">
        <dbReference type="Rhea" id="RHEA:63561"/>
    </physiologicalReaction>
</comment>
<comment type="catalytic activity">
    <reaction evidence="8">
        <text>bradykinin + H2O = L-Phe-L-Arg + bradykinin(1-7)</text>
        <dbReference type="Rhea" id="RHEA:71451"/>
        <dbReference type="ChEBI" id="CHEBI:15377"/>
        <dbReference type="ChEBI" id="CHEBI:132988"/>
        <dbReference type="ChEBI" id="CHEBI:133147"/>
        <dbReference type="ChEBI" id="CHEBI:147352"/>
    </reaction>
    <physiologicalReaction direction="left-to-right" evidence="8">
        <dbReference type="Rhea" id="RHEA:71452"/>
    </physiologicalReaction>
</comment>
<comment type="catalytic activity">
    <reaction evidence="2">
        <text>substance P + H2O = substance P(1-9) + L-Leu-L-Met-NH2</text>
        <dbReference type="Rhea" id="RHEA:71459"/>
        <dbReference type="ChEBI" id="CHEBI:15377"/>
        <dbReference type="ChEBI" id="CHEBI:190692"/>
        <dbReference type="ChEBI" id="CHEBI:190693"/>
        <dbReference type="ChEBI" id="CHEBI:190700"/>
    </reaction>
    <physiologicalReaction direction="left-to-right" evidence="2">
        <dbReference type="Rhea" id="RHEA:71460"/>
    </physiologicalReaction>
</comment>
<comment type="catalytic activity">
    <reaction evidence="2">
        <text>substance P + H2O = substance P(1-8) + Gly-L-Leu-L-Met-NH2</text>
        <dbReference type="Rhea" id="RHEA:71463"/>
        <dbReference type="ChEBI" id="CHEBI:15377"/>
        <dbReference type="ChEBI" id="CHEBI:190692"/>
        <dbReference type="ChEBI" id="CHEBI:190694"/>
        <dbReference type="ChEBI" id="CHEBI:190699"/>
    </reaction>
    <physiologicalReaction direction="left-to-right" evidence="2">
        <dbReference type="Rhea" id="RHEA:71464"/>
    </physiologicalReaction>
</comment>
<comment type="catalytic activity">
    <reaction evidence="2">
        <text>substance P + H2O = L-Phe-L-Phe-Gly-L-Leu-L-Met-NH2 + substance P(1-6)</text>
        <dbReference type="Rhea" id="RHEA:71471"/>
        <dbReference type="ChEBI" id="CHEBI:15377"/>
        <dbReference type="ChEBI" id="CHEBI:190692"/>
        <dbReference type="ChEBI" id="CHEBI:190696"/>
        <dbReference type="ChEBI" id="CHEBI:190697"/>
    </reaction>
    <physiologicalReaction direction="left-to-right" evidence="2">
        <dbReference type="Rhea" id="RHEA:71472"/>
    </physiologicalReaction>
</comment>
<comment type="catalytic activity">
    <reaction evidence="2">
        <text>neurotensin + H2O = neurotensin(1-11) + L-isoleucyl-L-leucine</text>
        <dbReference type="Rhea" id="RHEA:71475"/>
        <dbReference type="ChEBI" id="CHEBI:15377"/>
        <dbReference type="ChEBI" id="CHEBI:147362"/>
        <dbReference type="ChEBI" id="CHEBI:190704"/>
        <dbReference type="ChEBI" id="CHEBI:190706"/>
    </reaction>
    <physiologicalReaction direction="left-to-right" evidence="2">
        <dbReference type="Rhea" id="RHEA:71476"/>
    </physiologicalReaction>
</comment>
<comment type="catalytic activity">
    <reaction evidence="2">
        <text>goralatide + H2O = N-acetyl-L-seryl-L-aspartate + L-lysyl-L-proline</text>
        <dbReference type="Rhea" id="RHEA:71455"/>
        <dbReference type="ChEBI" id="CHEBI:15377"/>
        <dbReference type="ChEBI" id="CHEBI:190701"/>
        <dbReference type="ChEBI" id="CHEBI:190702"/>
        <dbReference type="ChEBI" id="CHEBI:190703"/>
    </reaction>
    <physiologicalReaction direction="left-to-right" evidence="2">
        <dbReference type="Rhea" id="RHEA:71456"/>
    </physiologicalReaction>
</comment>
<comment type="catalytic activity">
    <reaction evidence="2">
        <text>Met-enkephalin + H2O = L-phenylalanyl-L-methionine + L-tyrosylglycylglycine</text>
        <dbReference type="Rhea" id="RHEA:71483"/>
        <dbReference type="ChEBI" id="CHEBI:15377"/>
        <dbReference type="ChEBI" id="CHEBI:189868"/>
        <dbReference type="ChEBI" id="CHEBI:190708"/>
        <dbReference type="ChEBI" id="CHEBI:190709"/>
    </reaction>
    <physiologicalReaction direction="left-to-right" evidence="2">
        <dbReference type="Rhea" id="RHEA:71484"/>
    </physiologicalReaction>
</comment>
<comment type="catalytic activity">
    <reaction evidence="2">
        <text>Leu-enkephalin + H2O = L-tyrosylglycylglycine + L-phenylalanyl-L-leucine</text>
        <dbReference type="Rhea" id="RHEA:71487"/>
        <dbReference type="ChEBI" id="CHEBI:15377"/>
        <dbReference type="ChEBI" id="CHEBI:190689"/>
        <dbReference type="ChEBI" id="CHEBI:190708"/>
        <dbReference type="ChEBI" id="CHEBI:190710"/>
    </reaction>
    <physiologicalReaction direction="left-to-right" evidence="2">
        <dbReference type="Rhea" id="RHEA:71488"/>
    </physiologicalReaction>
</comment>
<comment type="catalytic activity">
    <reaction evidence="1">
        <text>Met-enkephalin-Arg-Phe + H2O = L-arginyl-L-phenylalanine + Met-enkephalin</text>
        <dbReference type="Rhea" id="RHEA:70675"/>
        <dbReference type="ChEBI" id="CHEBI:15377"/>
        <dbReference type="ChEBI" id="CHEBI:189868"/>
        <dbReference type="ChEBI" id="CHEBI:189869"/>
        <dbReference type="ChEBI" id="CHEBI:189870"/>
    </reaction>
    <physiologicalReaction direction="left-to-right" evidence="1">
        <dbReference type="Rhea" id="RHEA:70676"/>
    </physiologicalReaction>
</comment>
<comment type="cofactor">
    <cofactor evidence="2">
        <name>Zn(2+)</name>
        <dbReference type="ChEBI" id="CHEBI:29105"/>
    </cofactor>
    <text evidence="2">Binds 2 Zn(2+) ions per subunit.</text>
</comment>
<comment type="cofactor">
    <cofactor evidence="2">
        <name>chloride</name>
        <dbReference type="ChEBI" id="CHEBI:17996"/>
    </cofactor>
    <text evidence="2">Binds 3 chloride ions per subunit.</text>
</comment>
<comment type="activity regulation">
    <text evidence="2">The dipeptidyl carboxypeptidase activity is strongly activated by chloride. The dipeptidyl carboxypeptidase activity is specifically inhibited by lisinopril, captopril and enalaprilat.</text>
</comment>
<comment type="subunit">
    <text evidence="2 3">Monomer and homodimer; homodimerizes following binding to an inhibitor (By similarity). Interacts with calmodulin (CALM1, CALM2 or CALM3); interaction takes place in the cytoplasmic region and regulates phosphorylation and proteolytic cleavage (By similarity).</text>
</comment>
<comment type="subcellular location">
    <subcellularLocation>
        <location evidence="2">Cell membrane</location>
        <topology evidence="4">Single-pass type I membrane protein</topology>
    </subcellularLocation>
    <subcellularLocation>
        <location evidence="1">Cytoplasm</location>
    </subcellularLocation>
    <text evidence="1">Detected in both cell membrane and cytoplasm in neurons.</text>
</comment>
<comment type="subcellular location">
    <molecule>Angiotensin-converting enzyme, soluble form</molecule>
    <subcellularLocation>
        <location evidence="2">Secreted</location>
    </subcellularLocation>
</comment>
<comment type="PTM">
    <molecule>Angiotensin-converting enzyme, soluble form</molecule>
    <text evidence="2">Produced following proteolytic cleavage by secretase enzymes that cleave the transmembrane form in the juxtamembrane stalk region upstream of the transmembrane region. Cleavage can take place at different sites of the juxtamembrane stalk region.</text>
</comment>
<comment type="PTM">
    <text evidence="2 3">Phosphorylated by CK2 on Ser-1302; which allows membrane retention (By similarity). Phosphorylated on tyrosine residues on its extracellular part, promoting cleavage by secretase enzymes and formation of the soluble form (Angiotensin-converting enzyme, soluble form) (By similarity).</text>
</comment>
<comment type="similarity">
    <text evidence="7">Belongs to the peptidase M2 family.</text>
</comment>
<sequence length="1309" mass="150312">MGAASGCRWPWPPLLPLLLMLLLPPPPLPVALALDSALQPGNFTADEAGAEDFAQSFNSSSEQVLFQSTAASWAHDTNITEENARRQEEAALISQEFSEVWGQKAKALYDPIWQNFTSRTLRRIIGVVRTLGSANLSPAKRQQYNSLLSNMTRIYSTAKVCFPNKTATCWSLDPELTNILATSRSYTLLLYAWEGWHNAAGIPLKPLYQDFTALSNEAYKQDGFSDTGAYWRSLYDSPTFTEDLERLYHQLEPLYLNLHAYVRRALHRQYGDRFINLRGPIPAHLLGNMWAQSWNNIYDMVVPFPGKPSLDVTSAMVQKGWNVTHMFRVAEEFFTSLGLLPMPPEFWAESMLEKPSDGREVVCHASAWDFYNRKDFRIKQCTQVTMDQLSTVHHEMGHVQYYLQYKDQHVSLRRGANPGFHEAIGDVLALSVSTPAHLHKIGLLDHVTSDWESDINYLLKMALEKIAFLPFGYLVDQWRWGVFSGRTPPLYNYDWWYLRTKYQGVCPPVVRNETHFDAGAKYHVPNVTPYIRYFVSFILQFQFHQALCKEAGHQGPLHQCDIYQSTRAGAKLRAVLQAGSSRPWQEVLKDMVGSGALDAQPLLDYFQPVTQWLEEQNQRSGDILGWPEYQWRPPMPDNYPEGIDLVSDEAEASKFVEEYDRRSQVVLNEYAEANWDYNTNITAEGSKRVLEKSTQMANHTVKYGIWARKFDVANIQNFTLKRMIKKIQDLERAALPFKELEEYNQILLDMETAYSVASVCHANSTCLQLEPDLTNLMATSRSYEELLWAWKGWRDKVGRAILPYFPKYVELTNKAARLNGYEDGGDAWRAAYEMPFLEQELEQLFQELQPLYLNLHAYVRRALHHHYGPEHINLEGPIPAHLLGNMWAQTWSNIYDLVVPFPSASKMDASEAMINQGWTPQRMFKEADNFFTSLGLLPVPPEFWNKSMLEKPTDGREVVCHASAWDFFNGKDFRIKQCTTVNMEDLVVAHHEMGHIQYFMQYKDLPVTFREGANPGFHEAIGDVLALSVSTPKHLRSINLLKSEDDGYEEDINFLMKMALDKVAFVPFSYLVDQWRWRVFDRSITKENYNQEWWSLRLKYQGLCPPVARSQGDFDPGAKFHIPSSVPYIRYFVSFIIQFQFHEALCQAAGHKGPLHKCDIYQSKEAGRRLADAMKLGLSKPWPEAMQLITGQPNVSASAMMTYFKPLLDWLVTENGRHGEKLGWPQYNWTPNSARLEGSFAGTGRVNFLGLNLEEQQARVGQWVLLFLGVTLLVATMGLTQRLFSIRHQILRRTHRGPQFGSEVELRHS</sequence>
<evidence type="ECO:0000250" key="1">
    <source>
        <dbReference type="UniProtKB" id="P09470"/>
    </source>
</evidence>
<evidence type="ECO:0000250" key="2">
    <source>
        <dbReference type="UniProtKB" id="P12821"/>
    </source>
</evidence>
<evidence type="ECO:0000250" key="3">
    <source>
        <dbReference type="UniProtKB" id="P12822"/>
    </source>
</evidence>
<evidence type="ECO:0000255" key="4"/>
<evidence type="ECO:0000255" key="5">
    <source>
        <dbReference type="PROSITE-ProRule" id="PRU01355"/>
    </source>
</evidence>
<evidence type="ECO:0000269" key="6">
    <source>
    </source>
</evidence>
<evidence type="ECO:0000305" key="7"/>
<evidence type="ECO:0000305" key="8">
    <source>
    </source>
</evidence>
<organism>
    <name type="scientific">Sus scrofa</name>
    <name type="common">Pig</name>
    <dbReference type="NCBI Taxonomy" id="9823"/>
    <lineage>
        <taxon>Eukaryota</taxon>
        <taxon>Metazoa</taxon>
        <taxon>Chordata</taxon>
        <taxon>Craniata</taxon>
        <taxon>Vertebrata</taxon>
        <taxon>Euteleostomi</taxon>
        <taxon>Mammalia</taxon>
        <taxon>Eutheria</taxon>
        <taxon>Laurasiatheria</taxon>
        <taxon>Artiodactyla</taxon>
        <taxon>Suina</taxon>
        <taxon>Suidae</taxon>
        <taxon>Sus</taxon>
    </lineage>
</organism>
<proteinExistence type="evidence at protein level"/>
<accession>F1RRW5</accession>
<gene>
    <name evidence="2" type="primary">ACE</name>
</gene>
<keyword id="KW-0112">Calmodulin-binding</keyword>
<keyword id="KW-0121">Carboxypeptidase</keyword>
<keyword id="KW-1003">Cell membrane</keyword>
<keyword id="KW-0963">Cytoplasm</keyword>
<keyword id="KW-1015">Disulfide bond</keyword>
<keyword id="KW-0325">Glycoprotein</keyword>
<keyword id="KW-0378">Hydrolase</keyword>
<keyword id="KW-0472">Membrane</keyword>
<keyword id="KW-0479">Metal-binding</keyword>
<keyword id="KW-0482">Metalloprotease</keyword>
<keyword id="KW-0597">Phosphoprotein</keyword>
<keyword id="KW-0645">Protease</keyword>
<keyword id="KW-1185">Reference proteome</keyword>
<keyword id="KW-0677">Repeat</keyword>
<keyword id="KW-0964">Secreted</keyword>
<keyword id="KW-0732">Signal</keyword>
<keyword id="KW-0812">Transmembrane</keyword>
<keyword id="KW-1133">Transmembrane helix</keyword>
<keyword id="KW-0862">Zinc</keyword>
<reference key="1">
    <citation type="submission" date="2009-11" db="EMBL/GenBank/DDBJ databases">
        <authorList>
            <consortium name="Porcine genome sequencing project"/>
        </authorList>
    </citation>
    <scope>NUCLEOTIDE SEQUENCE [LARGE SCALE GENOMIC DNA]</scope>
    <source>
        <strain>Duroc</strain>
    </source>
</reference>
<reference key="2">
    <citation type="journal article" date="1967" name="Life Sci.">
        <title>An enzyme in microsomal fraction of kidney that inactivates bradykinin.</title>
        <authorList>
            <person name="Erdos E.G."/>
            <person name="Yang H.Y."/>
        </authorList>
    </citation>
    <scope>FUNCTION</scope>
    <scope>CATALYTIC ACTIVITY</scope>
</reference>
<name>ACE_PIG</name>
<feature type="signal peptide" evidence="4">
    <location>
        <begin position="1"/>
        <end position="33"/>
    </location>
</feature>
<feature type="chain" id="PRO_5013039630" description="Angiotensin-converting enzyme">
    <location>
        <begin position="34"/>
        <end position="1309"/>
    </location>
</feature>
<feature type="chain" id="PRO_0000455961" description="Angiotensin-converting enzyme, soluble form" evidence="2">
    <location>
        <begin position="34"/>
        <end position="1235"/>
    </location>
</feature>
<feature type="topological domain" description="Extracellular" evidence="7">
    <location>
        <begin position="34"/>
        <end position="1259"/>
    </location>
</feature>
<feature type="transmembrane region" description="Helical" evidence="4">
    <location>
        <begin position="1260"/>
        <end position="1280"/>
    </location>
</feature>
<feature type="topological domain" description="Cytoplasmic" evidence="7">
    <location>
        <begin position="1281"/>
        <end position="1309"/>
    </location>
</feature>
<feature type="domain" description="Peptidase M2 1" evidence="5">
    <location>
        <begin position="44"/>
        <end position="627"/>
    </location>
</feature>
<feature type="domain" description="Peptidase M2 2" evidence="5">
    <location>
        <begin position="646"/>
        <end position="1225"/>
    </location>
</feature>
<feature type="region of interest" description="Juxtamembrane stalk" evidence="2">
    <location>
        <begin position="1218"/>
        <end position="1259"/>
    </location>
</feature>
<feature type="active site" description="Proton acceptor 1" evidence="5">
    <location>
        <position position="395"/>
    </location>
</feature>
<feature type="active site" description="Proton donor 1" evidence="5">
    <location>
        <position position="523"/>
    </location>
</feature>
<feature type="active site" description="Proton acceptor 2" evidence="5">
    <location>
        <position position="992"/>
    </location>
</feature>
<feature type="active site" description="Proton donor 2" evidence="5">
    <location>
        <position position="1121"/>
    </location>
</feature>
<feature type="binding site" evidence="5">
    <location>
        <position position="235"/>
    </location>
    <ligand>
        <name>chloride</name>
        <dbReference type="ChEBI" id="CHEBI:17996"/>
        <label>1</label>
    </ligand>
</feature>
<feature type="binding site" evidence="5">
    <location>
        <position position="394"/>
    </location>
    <ligand>
        <name>Zn(2+)</name>
        <dbReference type="ChEBI" id="CHEBI:29105"/>
        <label>1</label>
        <note>catalytic</note>
    </ligand>
</feature>
<feature type="binding site" evidence="5">
    <location>
        <position position="398"/>
    </location>
    <ligand>
        <name>Zn(2+)</name>
        <dbReference type="ChEBI" id="CHEBI:29105"/>
        <label>1</label>
        <note>catalytic</note>
    </ligand>
</feature>
<feature type="binding site" evidence="5">
    <location>
        <position position="422"/>
    </location>
    <ligand>
        <name>Zn(2+)</name>
        <dbReference type="ChEBI" id="CHEBI:29105"/>
        <label>1</label>
        <note>catalytic</note>
    </ligand>
</feature>
<feature type="binding site" evidence="5">
    <location>
        <position position="532"/>
    </location>
    <ligand>
        <name>chloride</name>
        <dbReference type="ChEBI" id="CHEBI:17996"/>
        <label>1</label>
    </ligand>
</feature>
<feature type="binding site" evidence="5">
    <location>
        <position position="794"/>
    </location>
    <ligand>
        <name>chloride</name>
        <dbReference type="ChEBI" id="CHEBI:17996"/>
        <label>2</label>
    </ligand>
</feature>
<feature type="binding site" evidence="5">
    <location>
        <position position="832"/>
    </location>
    <ligand>
        <name>chloride</name>
        <dbReference type="ChEBI" id="CHEBI:17996"/>
        <label>3</label>
    </ligand>
</feature>
<feature type="binding site" evidence="5">
    <location>
        <position position="991"/>
    </location>
    <ligand>
        <name>Zn(2+)</name>
        <dbReference type="ChEBI" id="CHEBI:29105"/>
        <label>2</label>
        <note>catalytic</note>
    </ligand>
</feature>
<feature type="binding site" evidence="5">
    <location>
        <position position="995"/>
    </location>
    <ligand>
        <name>Zn(2+)</name>
        <dbReference type="ChEBI" id="CHEBI:29105"/>
        <label>2</label>
        <note>catalytic</note>
    </ligand>
</feature>
<feature type="binding site" evidence="5">
    <location>
        <position position="1019"/>
    </location>
    <ligand>
        <name>Zn(2+)</name>
        <dbReference type="ChEBI" id="CHEBI:29105"/>
        <label>2</label>
        <note>catalytic</note>
    </ligand>
</feature>
<feature type="binding site" evidence="5">
    <location>
        <position position="1093"/>
    </location>
    <ligand>
        <name>chloride</name>
        <dbReference type="ChEBI" id="CHEBI:17996"/>
        <label>2</label>
    </ligand>
</feature>
<feature type="binding site" evidence="5">
    <location>
        <position position="1097"/>
    </location>
    <ligand>
        <name>chloride</name>
        <dbReference type="ChEBI" id="CHEBI:17996"/>
        <label>2</label>
    </ligand>
</feature>
<feature type="binding site" evidence="5">
    <location>
        <position position="1130"/>
    </location>
    <ligand>
        <name>chloride</name>
        <dbReference type="ChEBI" id="CHEBI:17996"/>
        <label>3</label>
    </ligand>
</feature>
<feature type="site" description="Cleavage" evidence="2">
    <location>
        <begin position="1236"/>
        <end position="1237"/>
    </location>
</feature>
<feature type="modified residue" description="Phosphoserine" evidence="2">
    <location>
        <position position="1302"/>
    </location>
</feature>
<feature type="glycosylation site" description="N-linked (GlcNAc...) asparagine" evidence="4">
    <location>
        <position position="42"/>
    </location>
</feature>
<feature type="glycosylation site" description="N-linked (GlcNAc...) asparagine" evidence="4">
    <location>
        <position position="58"/>
    </location>
</feature>
<feature type="glycosylation site" description="N-linked (GlcNAc...) asparagine" evidence="4">
    <location>
        <position position="78"/>
    </location>
</feature>
<feature type="glycosylation site" description="N-linked (GlcNAc...) asparagine" evidence="4">
    <location>
        <position position="115"/>
    </location>
</feature>
<feature type="glycosylation site" description="N-linked (GlcNAc...) asparagine" evidence="4">
    <location>
        <position position="135"/>
    </location>
</feature>
<feature type="glycosylation site" description="N-linked (GlcNAc...) asparagine" evidence="4">
    <location>
        <position position="150"/>
    </location>
</feature>
<feature type="glycosylation site" description="N-linked (GlcNAc...) asparagine" evidence="4">
    <location>
        <position position="164"/>
    </location>
</feature>
<feature type="glycosylation site" description="N-linked (GlcNAc...) asparagine" evidence="4">
    <location>
        <position position="322"/>
    </location>
</feature>
<feature type="glycosylation site" description="N-linked (GlcNAc...) asparagine" evidence="4">
    <location>
        <position position="512"/>
    </location>
</feature>
<feature type="glycosylation site" description="N-linked (GlcNAc...) asparagine" evidence="4">
    <location>
        <position position="526"/>
    </location>
</feature>
<feature type="glycosylation site" description="N-linked (GlcNAc...) asparagine" evidence="4">
    <location>
        <position position="680"/>
    </location>
</feature>
<feature type="glycosylation site" description="N-linked (GlcNAc...) asparagine" evidence="4">
    <location>
        <position position="698"/>
    </location>
</feature>
<feature type="glycosylation site" description="N-linked (GlcNAc...) asparagine" evidence="4">
    <location>
        <position position="717"/>
    </location>
</feature>
<feature type="glycosylation site" description="N-linked (GlcNAc...) asparagine" evidence="4">
    <location>
        <position position="763"/>
    </location>
</feature>
<feature type="glycosylation site" description="N-linked (GlcNAc...) asparagine" evidence="4">
    <location>
        <position position="945"/>
    </location>
</feature>
<feature type="glycosylation site" description="N-linked (GlcNAc...) asparagine" evidence="4">
    <location>
        <position position="1194"/>
    </location>
</feature>
<feature type="glycosylation site" description="N-linked (GlcNAc...) asparagine" evidence="4">
    <location>
        <position position="1228"/>
    </location>
</feature>
<feature type="disulfide bond" evidence="5">
    <location>
        <begin position="161"/>
        <end position="169"/>
    </location>
</feature>
<feature type="disulfide bond" evidence="5">
    <location>
        <begin position="363"/>
        <end position="381"/>
    </location>
</feature>
<feature type="disulfide bond" evidence="5">
    <location>
        <begin position="548"/>
        <end position="560"/>
    </location>
</feature>
<feature type="disulfide bond" evidence="5">
    <location>
        <begin position="760"/>
        <end position="766"/>
    </location>
</feature>
<feature type="disulfide bond" evidence="5">
    <location>
        <begin position="960"/>
        <end position="978"/>
    </location>
</feature>
<feature type="disulfide bond" evidence="5">
    <location>
        <begin position="1146"/>
        <end position="1158"/>
    </location>
</feature>
<protein>
    <recommendedName>
        <fullName evidence="7">Angiotensin-converting enzyme</fullName>
        <shortName evidence="2">ACE</shortName>
        <ecNumber evidence="2">3.4.15.1</ecNumber>
    </recommendedName>
    <alternativeName>
        <fullName>Dipeptidyl carboxypeptidase I</fullName>
    </alternativeName>
    <alternativeName>
        <fullName evidence="2">Kininase II</fullName>
    </alternativeName>
    <component>
        <recommendedName>
            <fullName evidence="2">Angiotensin-converting enzyme, soluble form</fullName>
        </recommendedName>
    </component>
</protein>